<name>IOLJ_HALH5</name>
<gene>
    <name type="primary">iolJ</name>
    <name type="ordered locus">BH2314</name>
</gene>
<feature type="chain" id="PRO_0000352282" description="6-phospho-5-dehydro-2-deoxy-D-gluconate aldolase">
    <location>
        <begin position="1"/>
        <end position="288"/>
    </location>
</feature>
<feature type="active site" description="Proton donor" evidence="1">
    <location>
        <position position="85"/>
    </location>
</feature>
<feature type="binding site" evidence="1">
    <location>
        <position position="86"/>
    </location>
    <ligand>
        <name>Zn(2+)</name>
        <dbReference type="ChEBI" id="CHEBI:29105"/>
        <note>catalytic</note>
    </ligand>
</feature>
<feature type="binding site" evidence="1">
    <location>
        <position position="180"/>
    </location>
    <ligand>
        <name>Zn(2+)</name>
        <dbReference type="ChEBI" id="CHEBI:29105"/>
        <note>catalytic</note>
    </ligand>
</feature>
<feature type="binding site" evidence="1">
    <location>
        <position position="181"/>
    </location>
    <ligand>
        <name>dihydroxyacetone phosphate</name>
        <dbReference type="ChEBI" id="CHEBI:57642"/>
    </ligand>
</feature>
<feature type="binding site" evidence="1">
    <location>
        <position position="208"/>
    </location>
    <ligand>
        <name>Zn(2+)</name>
        <dbReference type="ChEBI" id="CHEBI:29105"/>
        <note>catalytic</note>
    </ligand>
</feature>
<feature type="binding site" evidence="1">
    <location>
        <begin position="209"/>
        <end position="211"/>
    </location>
    <ligand>
        <name>dihydroxyacetone phosphate</name>
        <dbReference type="ChEBI" id="CHEBI:57642"/>
    </ligand>
</feature>
<feature type="binding site" evidence="1">
    <location>
        <begin position="230"/>
        <end position="233"/>
    </location>
    <ligand>
        <name>dihydroxyacetone phosphate</name>
        <dbReference type="ChEBI" id="CHEBI:57642"/>
    </ligand>
</feature>
<feature type="modified residue" description="Phosphothreonine" evidence="1">
    <location>
        <position position="233"/>
    </location>
</feature>
<keyword id="KW-0456">Lyase</keyword>
<keyword id="KW-0479">Metal-binding</keyword>
<keyword id="KW-0597">Phosphoprotein</keyword>
<keyword id="KW-1185">Reference proteome</keyword>
<keyword id="KW-0862">Zinc</keyword>
<evidence type="ECO:0000250" key="1"/>
<evidence type="ECO:0000305" key="2"/>
<proteinExistence type="inferred from homology"/>
<organism>
    <name type="scientific">Halalkalibacterium halodurans (strain ATCC BAA-125 / DSM 18197 / FERM 7344 / JCM 9153 / C-125)</name>
    <name type="common">Bacillus halodurans</name>
    <dbReference type="NCBI Taxonomy" id="272558"/>
    <lineage>
        <taxon>Bacteria</taxon>
        <taxon>Bacillati</taxon>
        <taxon>Bacillota</taxon>
        <taxon>Bacilli</taxon>
        <taxon>Bacillales</taxon>
        <taxon>Bacillaceae</taxon>
        <taxon>Halalkalibacterium (ex Joshi et al. 2022)</taxon>
    </lineage>
</organism>
<comment type="function">
    <text evidence="1">Produces dihydroxyacetone phosphate (DHAP or glycerone phosphate) and malonic semialdehyde (MSA or 3-oxopropanoate) from 6-phospho-5-dehydro-2-deoxy-D-gluconate (DKGP).</text>
</comment>
<comment type="catalytic activity">
    <reaction>
        <text>6-phospho-5-dehydro-2-deoxy-D-gluconate = 3-oxopropanoate + dihydroxyacetone phosphate</text>
        <dbReference type="Rhea" id="RHEA:13177"/>
        <dbReference type="ChEBI" id="CHEBI:33190"/>
        <dbReference type="ChEBI" id="CHEBI:57642"/>
        <dbReference type="ChEBI" id="CHEBI:57949"/>
        <dbReference type="EC" id="4.1.2.29"/>
    </reaction>
</comment>
<comment type="cofactor">
    <cofactor evidence="1">
        <name>Zn(2+)</name>
        <dbReference type="ChEBI" id="CHEBI:29105"/>
    </cofactor>
</comment>
<comment type="pathway">
    <text>Polyol metabolism; myo-inositol degradation into acetyl-CoA; acetyl-CoA from myo-inositol: step 6/7.</text>
</comment>
<comment type="similarity">
    <text evidence="2">Belongs to the class II fructose-bisphosphate aldolase family. IolJ subfamily.</text>
</comment>
<reference key="1">
    <citation type="journal article" date="2000" name="Nucleic Acids Res.">
        <title>Complete genome sequence of the alkaliphilic bacterium Bacillus halodurans and genomic sequence comparison with Bacillus subtilis.</title>
        <authorList>
            <person name="Takami H."/>
            <person name="Nakasone K."/>
            <person name="Takaki Y."/>
            <person name="Maeno G."/>
            <person name="Sasaki R."/>
            <person name="Masui N."/>
            <person name="Fuji F."/>
            <person name="Hirama C."/>
            <person name="Nakamura Y."/>
            <person name="Ogasawara N."/>
            <person name="Kuhara S."/>
            <person name="Horikoshi K."/>
        </authorList>
    </citation>
    <scope>NUCLEOTIDE SEQUENCE [LARGE SCALE GENOMIC DNA]</scope>
    <source>
        <strain>ATCC BAA-125 / DSM 18197 / FERM 7344 / JCM 9153 / C-125</strain>
    </source>
</reference>
<sequence length="288" mass="31175">MALVSMKEMLKKAKAGHYAVGQFNLNNLQWAQAILQAAEEEQAPVIVAASDRLVDFLGGFQTITSMVNSLLIEMKITVPVALHLDHGMTIDRCKQAIDAGFTSVMIDGSHSPIEDNIAMTKEVVAYAQPRNVSVEAEVGTVGGMEDGLIGGVKYADLDECVRVVEEANIDALAAALGSVHGPYQGEPKLGFEEMKVISERTGVPLVLHGGSGIPDYQIRKAILLGHAKINVNTECLQAWAHAVRTILTNDQDIYDYRAITTPGTEAIVETVKTKMREFQTSGKAKERV</sequence>
<protein>
    <recommendedName>
        <fullName>6-phospho-5-dehydro-2-deoxy-D-gluconate aldolase</fullName>
        <shortName>DKGP aldolase</shortName>
        <ecNumber>4.1.2.29</ecNumber>
    </recommendedName>
</protein>
<accession>Q9KAH3</accession>
<dbReference type="EC" id="4.1.2.29"/>
<dbReference type="EMBL" id="BA000004">
    <property type="protein sequence ID" value="BAB06033.1"/>
    <property type="molecule type" value="Genomic_DNA"/>
</dbReference>
<dbReference type="PIR" id="B83939">
    <property type="entry name" value="B83939"/>
</dbReference>
<dbReference type="RefSeq" id="WP_010898470.1">
    <property type="nucleotide sequence ID" value="NC_002570.2"/>
</dbReference>
<dbReference type="SMR" id="Q9KAH3"/>
<dbReference type="STRING" id="272558.gene:10728212"/>
<dbReference type="KEGG" id="bha:BH2314"/>
<dbReference type="eggNOG" id="COG0191">
    <property type="taxonomic scope" value="Bacteria"/>
</dbReference>
<dbReference type="HOGENOM" id="CLU_040088_0_1_9"/>
<dbReference type="OrthoDB" id="9803995at2"/>
<dbReference type="UniPathway" id="UPA00076">
    <property type="reaction ID" value="UER00147"/>
</dbReference>
<dbReference type="Proteomes" id="UP000001258">
    <property type="component" value="Chromosome"/>
</dbReference>
<dbReference type="GO" id="GO:0047441">
    <property type="term" value="F:5-dehydro-2-deoxyphosphogluconate aldolase activity"/>
    <property type="evidence" value="ECO:0007669"/>
    <property type="project" value="UniProtKB-EC"/>
</dbReference>
<dbReference type="GO" id="GO:0004332">
    <property type="term" value="F:fructose-bisphosphate aldolase activity"/>
    <property type="evidence" value="ECO:0007669"/>
    <property type="project" value="InterPro"/>
</dbReference>
<dbReference type="GO" id="GO:0008270">
    <property type="term" value="F:zinc ion binding"/>
    <property type="evidence" value="ECO:0007669"/>
    <property type="project" value="InterPro"/>
</dbReference>
<dbReference type="GO" id="GO:0030388">
    <property type="term" value="P:fructose 1,6-bisphosphate metabolic process"/>
    <property type="evidence" value="ECO:0007669"/>
    <property type="project" value="InterPro"/>
</dbReference>
<dbReference type="GO" id="GO:0006096">
    <property type="term" value="P:glycolytic process"/>
    <property type="evidence" value="ECO:0007669"/>
    <property type="project" value="InterPro"/>
</dbReference>
<dbReference type="CDD" id="cd00947">
    <property type="entry name" value="TBP_aldolase_IIB"/>
    <property type="match status" value="1"/>
</dbReference>
<dbReference type="Gene3D" id="3.20.20.70">
    <property type="entry name" value="Aldolase class I"/>
    <property type="match status" value="1"/>
</dbReference>
<dbReference type="InterPro" id="IPR013785">
    <property type="entry name" value="Aldolase_TIM"/>
</dbReference>
<dbReference type="InterPro" id="IPR050246">
    <property type="entry name" value="Class_II_FBP_aldolase"/>
</dbReference>
<dbReference type="InterPro" id="IPR000771">
    <property type="entry name" value="FBA_II"/>
</dbReference>
<dbReference type="InterPro" id="IPR011289">
    <property type="entry name" value="Fruc_bis_ald_class-2"/>
</dbReference>
<dbReference type="NCBIfam" id="TIGR00167">
    <property type="entry name" value="cbbA"/>
    <property type="match status" value="1"/>
</dbReference>
<dbReference type="NCBIfam" id="TIGR01859">
    <property type="entry name" value="fruc_bis_ald"/>
    <property type="match status" value="1"/>
</dbReference>
<dbReference type="PANTHER" id="PTHR30304">
    <property type="entry name" value="D-TAGATOSE-1,6-BISPHOSPHATE ALDOLASE"/>
    <property type="match status" value="1"/>
</dbReference>
<dbReference type="PANTHER" id="PTHR30304:SF0">
    <property type="entry name" value="D-TAGATOSE-1,6-BISPHOSPHATE ALDOLASE SUBUNIT GATY-RELATED"/>
    <property type="match status" value="1"/>
</dbReference>
<dbReference type="Pfam" id="PF01116">
    <property type="entry name" value="F_bP_aldolase"/>
    <property type="match status" value="1"/>
</dbReference>
<dbReference type="PIRSF" id="PIRSF001359">
    <property type="entry name" value="F_bP_aldolase_II"/>
    <property type="match status" value="1"/>
</dbReference>
<dbReference type="SUPFAM" id="SSF51569">
    <property type="entry name" value="Aldolase"/>
    <property type="match status" value="1"/>
</dbReference>
<dbReference type="PROSITE" id="PS00602">
    <property type="entry name" value="ALDOLASE_CLASS_II_1"/>
    <property type="match status" value="1"/>
</dbReference>
<dbReference type="PROSITE" id="PS00806">
    <property type="entry name" value="ALDOLASE_CLASS_II_2"/>
    <property type="match status" value="1"/>
</dbReference>